<dbReference type="EC" id="2.3.2.27"/>
<dbReference type="EMBL" id="AF186461">
    <property type="protein sequence ID" value="AAD56247.1"/>
    <property type="molecule type" value="mRNA"/>
</dbReference>
<dbReference type="RefSeq" id="NP_001418534.1">
    <property type="nucleotide sequence ID" value="NM_001431605.1"/>
</dbReference>
<dbReference type="RefSeq" id="NP_001418535.1">
    <property type="nucleotide sequence ID" value="NM_001431606.1"/>
</dbReference>
<dbReference type="RefSeq" id="NP_001418536.1">
    <property type="nucleotide sequence ID" value="NM_001431607.1"/>
</dbReference>
<dbReference type="RefSeq" id="NP_001418537.1">
    <property type="nucleotide sequence ID" value="NM_001431608.1"/>
</dbReference>
<dbReference type="RefSeq" id="NP_075216.1">
    <property type="nucleotide sequence ID" value="NM_022927.2"/>
</dbReference>
<dbReference type="RefSeq" id="XP_006256887.1">
    <property type="nucleotide sequence ID" value="XM_006256825.3"/>
</dbReference>
<dbReference type="RefSeq" id="XP_017457631.1">
    <property type="nucleotide sequence ID" value="XM_017602142.1"/>
</dbReference>
<dbReference type="RefSeq" id="XP_017457632.1">
    <property type="nucleotide sequence ID" value="XM_017602143.1"/>
</dbReference>
<dbReference type="BMRB" id="P82458"/>
<dbReference type="SMR" id="P82458"/>
<dbReference type="FunCoup" id="P82458">
    <property type="interactions" value="924"/>
</dbReference>
<dbReference type="STRING" id="10116.ENSRNOP00000072598"/>
<dbReference type="PhosphoSitePlus" id="P82458"/>
<dbReference type="PaxDb" id="10116-ENSRNOP00000004873"/>
<dbReference type="Ensembl" id="ENSRNOT00000004873.7">
    <property type="protein sequence ID" value="ENSRNOP00000004873.5"/>
    <property type="gene ID" value="ENSRNOG00000003613.8"/>
</dbReference>
<dbReference type="GeneID" id="54252"/>
<dbReference type="KEGG" id="rno:54252"/>
<dbReference type="AGR" id="RGD:2640"/>
<dbReference type="CTD" id="4281"/>
<dbReference type="RGD" id="2640">
    <property type="gene designation" value="Mid1"/>
</dbReference>
<dbReference type="eggNOG" id="KOG2177">
    <property type="taxonomic scope" value="Eukaryota"/>
</dbReference>
<dbReference type="GeneTree" id="ENSGT00940000155821"/>
<dbReference type="InParanoid" id="P82458"/>
<dbReference type="OMA" id="FCDQEPA"/>
<dbReference type="OrthoDB" id="9049620at2759"/>
<dbReference type="PhylomeDB" id="P82458"/>
<dbReference type="PRO" id="PR:P82458"/>
<dbReference type="Proteomes" id="UP000002494">
    <property type="component" value="Chromosome X"/>
</dbReference>
<dbReference type="Bgee" id="ENSRNOG00000003613">
    <property type="expression patterns" value="Expressed in quadriceps femoris and 19 other cell types or tissues"/>
</dbReference>
<dbReference type="GO" id="GO:0034451">
    <property type="term" value="C:centriolar satellite"/>
    <property type="evidence" value="ECO:0007669"/>
    <property type="project" value="Ensembl"/>
</dbReference>
<dbReference type="GO" id="GO:0005737">
    <property type="term" value="C:cytoplasm"/>
    <property type="evidence" value="ECO:0000266"/>
    <property type="project" value="RGD"/>
</dbReference>
<dbReference type="GO" id="GO:0005881">
    <property type="term" value="C:cytoplasmic microtubule"/>
    <property type="evidence" value="ECO:0000266"/>
    <property type="project" value="RGD"/>
</dbReference>
<dbReference type="GO" id="GO:0005829">
    <property type="term" value="C:cytosol"/>
    <property type="evidence" value="ECO:0007669"/>
    <property type="project" value="Ensembl"/>
</dbReference>
<dbReference type="GO" id="GO:0005794">
    <property type="term" value="C:Golgi apparatus"/>
    <property type="evidence" value="ECO:0007669"/>
    <property type="project" value="Ensembl"/>
</dbReference>
<dbReference type="GO" id="GO:0005874">
    <property type="term" value="C:microtubule"/>
    <property type="evidence" value="ECO:0000266"/>
    <property type="project" value="RGD"/>
</dbReference>
<dbReference type="GO" id="GO:0015630">
    <property type="term" value="C:microtubule cytoskeleton"/>
    <property type="evidence" value="ECO:0000266"/>
    <property type="project" value="RGD"/>
</dbReference>
<dbReference type="GO" id="GO:0019899">
    <property type="term" value="F:enzyme binding"/>
    <property type="evidence" value="ECO:0000266"/>
    <property type="project" value="RGD"/>
</dbReference>
<dbReference type="GO" id="GO:0042802">
    <property type="term" value="F:identical protein binding"/>
    <property type="evidence" value="ECO:0000266"/>
    <property type="project" value="RGD"/>
</dbReference>
<dbReference type="GO" id="GO:0008017">
    <property type="term" value="F:microtubule binding"/>
    <property type="evidence" value="ECO:0000266"/>
    <property type="project" value="RGD"/>
</dbReference>
<dbReference type="GO" id="GO:0051219">
    <property type="term" value="F:phosphoprotein binding"/>
    <property type="evidence" value="ECO:0000266"/>
    <property type="project" value="RGD"/>
</dbReference>
<dbReference type="GO" id="GO:0042803">
    <property type="term" value="F:protein homodimerization activity"/>
    <property type="evidence" value="ECO:0000266"/>
    <property type="project" value="RGD"/>
</dbReference>
<dbReference type="GO" id="GO:0016740">
    <property type="term" value="F:transferase activity"/>
    <property type="evidence" value="ECO:0007669"/>
    <property type="project" value="UniProtKB-KW"/>
</dbReference>
<dbReference type="GO" id="GO:0031625">
    <property type="term" value="F:ubiquitin protein ligase binding"/>
    <property type="evidence" value="ECO:0000266"/>
    <property type="project" value="RGD"/>
</dbReference>
<dbReference type="GO" id="GO:0008270">
    <property type="term" value="F:zinc ion binding"/>
    <property type="evidence" value="ECO:0007669"/>
    <property type="project" value="UniProtKB-KW"/>
</dbReference>
<dbReference type="GO" id="GO:0007026">
    <property type="term" value="P:negative regulation of microtubule depolymerization"/>
    <property type="evidence" value="ECO:0000266"/>
    <property type="project" value="RGD"/>
</dbReference>
<dbReference type="GO" id="GO:0032874">
    <property type="term" value="P:positive regulation of stress-activated MAPK cascade"/>
    <property type="evidence" value="ECO:0000266"/>
    <property type="project" value="RGD"/>
</dbReference>
<dbReference type="GO" id="GO:0035372">
    <property type="term" value="P:protein localization to microtubule"/>
    <property type="evidence" value="ECO:0000266"/>
    <property type="project" value="RGD"/>
</dbReference>
<dbReference type="GO" id="GO:0070507">
    <property type="term" value="P:regulation of microtubule cytoskeleton organization"/>
    <property type="evidence" value="ECO:0000318"/>
    <property type="project" value="GO_Central"/>
</dbReference>
<dbReference type="CDD" id="cd19836">
    <property type="entry name" value="Bbox1_MID1_C-I"/>
    <property type="match status" value="1"/>
</dbReference>
<dbReference type="CDD" id="cd19822">
    <property type="entry name" value="Bbox2_MID1_C-I"/>
    <property type="match status" value="1"/>
</dbReference>
<dbReference type="CDD" id="cd00063">
    <property type="entry name" value="FN3"/>
    <property type="match status" value="1"/>
</dbReference>
<dbReference type="CDD" id="cd16753">
    <property type="entry name" value="RING-HC_MID1"/>
    <property type="match status" value="1"/>
</dbReference>
<dbReference type="FunFam" id="2.60.120.920:FF:000010">
    <property type="entry name" value="E3 ubiquitin-protein ligase Midline-1"/>
    <property type="match status" value="1"/>
</dbReference>
<dbReference type="FunFam" id="3.30.160.60:FF:000334">
    <property type="entry name" value="E3 ubiquitin-protein ligase Midline-1"/>
    <property type="match status" value="1"/>
</dbReference>
<dbReference type="FunFam" id="2.60.40.10:FF:000153">
    <property type="entry name" value="Probable E3 ubiquitin-protein ligase MID2"/>
    <property type="match status" value="1"/>
</dbReference>
<dbReference type="FunFam" id="3.30.40.10:FF:000014">
    <property type="entry name" value="probable E3 ubiquitin-protein ligase MID2"/>
    <property type="match status" value="1"/>
</dbReference>
<dbReference type="FunFam" id="4.10.830.40:FF:000002">
    <property type="entry name" value="probable E3 ubiquitin-protein ligase MID2"/>
    <property type="match status" value="1"/>
</dbReference>
<dbReference type="Gene3D" id="2.60.120.920">
    <property type="match status" value="1"/>
</dbReference>
<dbReference type="Gene3D" id="4.10.830.40">
    <property type="match status" value="1"/>
</dbReference>
<dbReference type="Gene3D" id="3.30.160.60">
    <property type="entry name" value="Classic Zinc Finger"/>
    <property type="match status" value="1"/>
</dbReference>
<dbReference type="Gene3D" id="2.60.40.10">
    <property type="entry name" value="Immunoglobulins"/>
    <property type="match status" value="1"/>
</dbReference>
<dbReference type="Gene3D" id="3.30.40.10">
    <property type="entry name" value="Zinc/RING finger domain, C3HC4 (zinc finger)"/>
    <property type="match status" value="1"/>
</dbReference>
<dbReference type="InterPro" id="IPR001870">
    <property type="entry name" value="B30.2/SPRY"/>
</dbReference>
<dbReference type="InterPro" id="IPR043136">
    <property type="entry name" value="B30.2/SPRY_sf"/>
</dbReference>
<dbReference type="InterPro" id="IPR003649">
    <property type="entry name" value="Bbox_C"/>
</dbReference>
<dbReference type="InterPro" id="IPR003879">
    <property type="entry name" value="Butyrophylin_SPRY"/>
</dbReference>
<dbReference type="InterPro" id="IPR013320">
    <property type="entry name" value="ConA-like_dom_sf"/>
</dbReference>
<dbReference type="InterPro" id="IPR017903">
    <property type="entry name" value="COS_domain"/>
</dbReference>
<dbReference type="InterPro" id="IPR050617">
    <property type="entry name" value="E3_ligase_FN3/SPRY"/>
</dbReference>
<dbReference type="InterPro" id="IPR003961">
    <property type="entry name" value="FN3_dom"/>
</dbReference>
<dbReference type="InterPro" id="IPR036116">
    <property type="entry name" value="FN3_sf"/>
</dbReference>
<dbReference type="InterPro" id="IPR013783">
    <property type="entry name" value="Ig-like_fold"/>
</dbReference>
<dbReference type="InterPro" id="IPR047095">
    <property type="entry name" value="MID1_Bbox1_Zfn"/>
</dbReference>
<dbReference type="InterPro" id="IPR027727">
    <property type="entry name" value="MID1_Bbox2_Zfn"/>
</dbReference>
<dbReference type="InterPro" id="IPR040859">
    <property type="entry name" value="Midline-1_COS"/>
</dbReference>
<dbReference type="InterPro" id="IPR003877">
    <property type="entry name" value="SPRY_dom"/>
</dbReference>
<dbReference type="InterPro" id="IPR027370">
    <property type="entry name" value="Znf-RING_euk"/>
</dbReference>
<dbReference type="InterPro" id="IPR000315">
    <property type="entry name" value="Znf_B-box"/>
</dbReference>
<dbReference type="InterPro" id="IPR001841">
    <property type="entry name" value="Znf_RING"/>
</dbReference>
<dbReference type="InterPro" id="IPR013083">
    <property type="entry name" value="Znf_RING/FYVE/PHD"/>
</dbReference>
<dbReference type="InterPro" id="IPR017907">
    <property type="entry name" value="Znf_RING_CS"/>
</dbReference>
<dbReference type="PANTHER" id="PTHR24099:SF23">
    <property type="entry name" value="E3 UBIQUITIN-PROTEIN LIGASE MIDLINE-1"/>
    <property type="match status" value="1"/>
</dbReference>
<dbReference type="PANTHER" id="PTHR24099">
    <property type="entry name" value="E3 UBIQUITIN-PROTEIN LIGASE TRIM36-RELATED"/>
    <property type="match status" value="1"/>
</dbReference>
<dbReference type="Pfam" id="PF22586">
    <property type="entry name" value="ANCHR-like_BBOX"/>
    <property type="match status" value="1"/>
</dbReference>
<dbReference type="Pfam" id="PF18568">
    <property type="entry name" value="COS"/>
    <property type="match status" value="1"/>
</dbReference>
<dbReference type="Pfam" id="PF00041">
    <property type="entry name" value="fn3"/>
    <property type="match status" value="1"/>
</dbReference>
<dbReference type="Pfam" id="PF00622">
    <property type="entry name" value="SPRY"/>
    <property type="match status" value="1"/>
</dbReference>
<dbReference type="Pfam" id="PF00643">
    <property type="entry name" value="zf-B_box"/>
    <property type="match status" value="1"/>
</dbReference>
<dbReference type="Pfam" id="PF13445">
    <property type="entry name" value="zf-RING_UBOX"/>
    <property type="match status" value="1"/>
</dbReference>
<dbReference type="PRINTS" id="PR01407">
    <property type="entry name" value="BUTYPHLNCDUF"/>
</dbReference>
<dbReference type="SMART" id="SM00502">
    <property type="entry name" value="BBC"/>
    <property type="match status" value="1"/>
</dbReference>
<dbReference type="SMART" id="SM00336">
    <property type="entry name" value="BBOX"/>
    <property type="match status" value="2"/>
</dbReference>
<dbReference type="SMART" id="SM00060">
    <property type="entry name" value="FN3"/>
    <property type="match status" value="1"/>
</dbReference>
<dbReference type="SMART" id="SM00184">
    <property type="entry name" value="RING"/>
    <property type="match status" value="1"/>
</dbReference>
<dbReference type="SMART" id="SM00449">
    <property type="entry name" value="SPRY"/>
    <property type="match status" value="1"/>
</dbReference>
<dbReference type="SUPFAM" id="SSF57845">
    <property type="entry name" value="B-box zinc-binding domain"/>
    <property type="match status" value="1"/>
</dbReference>
<dbReference type="SUPFAM" id="SSF49899">
    <property type="entry name" value="Concanavalin A-like lectins/glucanases"/>
    <property type="match status" value="1"/>
</dbReference>
<dbReference type="SUPFAM" id="SSF49265">
    <property type="entry name" value="Fibronectin type III"/>
    <property type="match status" value="1"/>
</dbReference>
<dbReference type="SUPFAM" id="SSF57850">
    <property type="entry name" value="RING/U-box"/>
    <property type="match status" value="1"/>
</dbReference>
<dbReference type="PROSITE" id="PS50188">
    <property type="entry name" value="B302_SPRY"/>
    <property type="match status" value="1"/>
</dbReference>
<dbReference type="PROSITE" id="PS51262">
    <property type="entry name" value="COS"/>
    <property type="match status" value="1"/>
</dbReference>
<dbReference type="PROSITE" id="PS50853">
    <property type="entry name" value="FN3"/>
    <property type="match status" value="1"/>
</dbReference>
<dbReference type="PROSITE" id="PS50119">
    <property type="entry name" value="ZF_BBOX"/>
    <property type="match status" value="1"/>
</dbReference>
<dbReference type="PROSITE" id="PS00518">
    <property type="entry name" value="ZF_RING_1"/>
    <property type="match status" value="1"/>
</dbReference>
<dbReference type="PROSITE" id="PS50089">
    <property type="entry name" value="ZF_RING_2"/>
    <property type="match status" value="1"/>
</dbReference>
<accession>P82458</accession>
<gene>
    <name type="primary">Mid1</name>
    <name type="synonym">Fxy</name>
    <name type="synonym">Trim18</name>
</gene>
<protein>
    <recommendedName>
        <fullName>E3 ubiquitin-protein ligase Midline-1</fullName>
        <ecNumber>2.3.2.27</ecNumber>
    </recommendedName>
    <alternativeName>
        <fullName>RING finger protein Midline-1</fullName>
    </alternativeName>
    <alternativeName>
        <fullName evidence="10">RING-type E3 ubiquitin transferase Midline-1</fullName>
    </alternativeName>
    <alternativeName>
        <fullName>Tripartite motif-containing protein 18</fullName>
    </alternativeName>
</protein>
<organism>
    <name type="scientific">Rattus norvegicus</name>
    <name type="common">Rat</name>
    <dbReference type="NCBI Taxonomy" id="10116"/>
    <lineage>
        <taxon>Eukaryota</taxon>
        <taxon>Metazoa</taxon>
        <taxon>Chordata</taxon>
        <taxon>Craniata</taxon>
        <taxon>Vertebrata</taxon>
        <taxon>Euteleostomi</taxon>
        <taxon>Mammalia</taxon>
        <taxon>Eutheria</taxon>
        <taxon>Euarchontoglires</taxon>
        <taxon>Glires</taxon>
        <taxon>Rodentia</taxon>
        <taxon>Myomorpha</taxon>
        <taxon>Muroidea</taxon>
        <taxon>Muridae</taxon>
        <taxon>Murinae</taxon>
        <taxon>Rattus</taxon>
    </lineage>
</organism>
<keyword id="KW-0175">Coiled coil</keyword>
<keyword id="KW-0963">Cytoplasm</keyword>
<keyword id="KW-0206">Cytoskeleton</keyword>
<keyword id="KW-0479">Metal-binding</keyword>
<keyword id="KW-0493">Microtubule</keyword>
<keyword id="KW-0597">Phosphoprotein</keyword>
<keyword id="KW-1185">Reference proteome</keyword>
<keyword id="KW-0677">Repeat</keyword>
<keyword id="KW-0808">Transferase</keyword>
<keyword id="KW-0833">Ubl conjugation pathway</keyword>
<keyword id="KW-0862">Zinc</keyword>
<keyword id="KW-0863">Zinc-finger</keyword>
<comment type="function">
    <text evidence="2">Has E3 ubiquitin ligase activity towards IGBP1, promoting its monoubiquitination, which results in deprotection of the catalytic subunit of protein phosphatase PP2A, and its subsequent degradation by polyubiquitination.</text>
</comment>
<comment type="catalytic activity">
    <reaction>
        <text>S-ubiquitinyl-[E2 ubiquitin-conjugating enzyme]-L-cysteine + [acceptor protein]-L-lysine = [E2 ubiquitin-conjugating enzyme]-L-cysteine + N(6)-ubiquitinyl-[acceptor protein]-L-lysine.</text>
        <dbReference type="EC" id="2.3.2.27"/>
    </reaction>
</comment>
<comment type="subunit">
    <text evidence="2">Homodimer or heterodimer with MID2. Interacts with IGBP1.</text>
</comment>
<comment type="subcellular location">
    <subcellularLocation>
        <location evidence="2">Cytoplasm</location>
    </subcellularLocation>
    <subcellularLocation>
        <location evidence="2">Cytoplasm</location>
        <location evidence="2">Cytoskeleton</location>
    </subcellularLocation>
    <text evidence="2">Microtubule-associated.</text>
</comment>
<comment type="similarity">
    <text evidence="10">Belongs to the TRIM/RBCC family.</text>
</comment>
<name>TRI18_RAT</name>
<feature type="chain" id="PRO_0000056231" description="E3 ubiquitin-protein ligase Midline-1">
    <location>
        <begin position="1"/>
        <end position="667"/>
    </location>
</feature>
<feature type="domain" description="COS" evidence="8">
    <location>
        <begin position="320"/>
        <end position="379"/>
    </location>
</feature>
<feature type="domain" description="Fibronectin type-III" evidence="6">
    <location>
        <begin position="381"/>
        <end position="484"/>
    </location>
</feature>
<feature type="domain" description="B30.2/SPRY" evidence="7">
    <location>
        <begin position="482"/>
        <end position="659"/>
    </location>
</feature>
<feature type="zinc finger region" description="RING-type" evidence="5">
    <location>
        <begin position="10"/>
        <end position="60"/>
    </location>
</feature>
<feature type="zinc finger region" description="B box-type 1" evidence="4">
    <location>
        <begin position="116"/>
        <end position="165"/>
    </location>
</feature>
<feature type="zinc finger region" description="B box-type 2" evidence="4">
    <location>
        <begin position="172"/>
        <end position="212"/>
    </location>
</feature>
<feature type="region of interest" description="Disordered" evidence="9">
    <location>
        <begin position="471"/>
        <end position="524"/>
    </location>
</feature>
<feature type="coiled-coil region" evidence="3">
    <location>
        <begin position="205"/>
        <end position="264"/>
    </location>
</feature>
<feature type="compositionally biased region" description="Polar residues" evidence="9">
    <location>
        <begin position="471"/>
        <end position="485"/>
    </location>
</feature>
<feature type="compositionally biased region" description="Basic and acidic residues" evidence="9">
    <location>
        <begin position="499"/>
        <end position="520"/>
    </location>
</feature>
<feature type="binding site" evidence="1">
    <location>
        <position position="119"/>
    </location>
    <ligand>
        <name>Zn(2+)</name>
        <dbReference type="ChEBI" id="CHEBI:29105"/>
        <label>1</label>
    </ligand>
</feature>
<feature type="binding site" evidence="1">
    <location>
        <position position="122"/>
    </location>
    <ligand>
        <name>Zn(2+)</name>
        <dbReference type="ChEBI" id="CHEBI:29105"/>
        <label>1</label>
    </ligand>
</feature>
<feature type="binding site" evidence="1">
    <location>
        <position position="134"/>
    </location>
    <ligand>
        <name>Zn(2+)</name>
        <dbReference type="ChEBI" id="CHEBI:29105"/>
        <label>2</label>
    </ligand>
</feature>
<feature type="binding site" evidence="1">
    <location>
        <position position="137"/>
    </location>
    <ligand>
        <name>Zn(2+)</name>
        <dbReference type="ChEBI" id="CHEBI:29105"/>
        <label>2</label>
    </ligand>
</feature>
<feature type="binding site" evidence="1">
    <location>
        <position position="142"/>
    </location>
    <ligand>
        <name>Zn(2+)</name>
        <dbReference type="ChEBI" id="CHEBI:29105"/>
        <label>1</label>
    </ligand>
</feature>
<feature type="binding site" evidence="1">
    <location>
        <position position="145"/>
    </location>
    <ligand>
        <name>Zn(2+)</name>
        <dbReference type="ChEBI" id="CHEBI:29105"/>
        <label>1</label>
    </ligand>
</feature>
<feature type="binding site" evidence="1">
    <location>
        <position position="150"/>
    </location>
    <ligand>
        <name>Zn(2+)</name>
        <dbReference type="ChEBI" id="CHEBI:29105"/>
        <label>2</label>
    </ligand>
</feature>
<feature type="binding site" evidence="1">
    <location>
        <position position="159"/>
    </location>
    <ligand>
        <name>Zn(2+)</name>
        <dbReference type="ChEBI" id="CHEBI:29105"/>
        <label>2</label>
    </ligand>
</feature>
<feature type="binding site" evidence="4">
    <location>
        <position position="175"/>
    </location>
    <ligand>
        <name>Zn(2+)</name>
        <dbReference type="ChEBI" id="CHEBI:29105"/>
        <label>3</label>
    </ligand>
</feature>
<feature type="binding site" evidence="4">
    <location>
        <position position="178"/>
    </location>
    <ligand>
        <name>Zn(2+)</name>
        <dbReference type="ChEBI" id="CHEBI:29105"/>
        <label>3</label>
    </ligand>
</feature>
<feature type="binding site" evidence="4">
    <location>
        <position position="198"/>
    </location>
    <ligand>
        <name>Zn(2+)</name>
        <dbReference type="ChEBI" id="CHEBI:29105"/>
        <label>3</label>
    </ligand>
</feature>
<feature type="binding site" evidence="4">
    <location>
        <position position="204"/>
    </location>
    <ligand>
        <name>Zn(2+)</name>
        <dbReference type="ChEBI" id="CHEBI:29105"/>
        <label>3</label>
    </ligand>
</feature>
<feature type="modified residue" description="Phosphoserine" evidence="2">
    <location>
        <position position="92"/>
    </location>
</feature>
<feature type="modified residue" description="Phosphoserine" evidence="2">
    <location>
        <position position="96"/>
    </location>
</feature>
<feature type="modified residue" description="Phosphoserine" evidence="2">
    <location>
        <position position="511"/>
    </location>
</feature>
<sequence length="667" mass="75211">METLESELTCPICLELFEDPLLLPCAHSLCFNCAHRILVSHCATNEPVESINAFQCPTCRHVITLSQRGLDGLKRNVTLQNIIDRFQKASVSGPNSPSETRRERAFDANTMSSAEKVLCQFCDQDPAQDAVKTCVTCEVSYCDECLKATHPNKKPFTGHRLIEPIPDSHIRGLMCLEHEDEKVNMYCVTDDQLICALCKLVGRHRDHQVAALSERYDKLKQNLESNLTNLIKRNTELETLLAKLIQTCQHVEVNASRQEAKLTEECDLLIEIIQERRQIIGTKIKEGKVMRLRKLAQQIANCKQCIERSASLISQAEHSLKENDHARFLQTAKNITERVSMATASSQVLIPEINLNDTFDTFALDFSREKKLLECLDYLTAPNPPTIREELCTASYDTITVHWTSDDEFSVVSYELQYTIFTGQANVVSLCNSADSWMIVPNIKQNHYTVHGLQSGTKYIFMVKAINQAGSRSSEPGKLKTNSQPFKLDPKSAHRKLKVSHDNLTVERDESSSKKSHTPERFTSQGSYGVAGNVFIDSGRHYWEVVISGSTWYAIGLAYKSAPKHEWIGKNSASWALCRCNNNWVVRHNSKEIPIEPAPHPRRVGILLDYDNGSIAFYDALNSIHLYTFDVALAQPVCPTFTVWNKCLTIITGLPIPDHLDCTEQLP</sequence>
<proteinExistence type="evidence at transcript level"/>
<reference key="1">
    <citation type="journal article" date="1999" name="Curr. Biol.">
        <title>Evolutionary rate of a gene affected by chromosomal position.</title>
        <authorList>
            <person name="Perry J."/>
            <person name="Ashworth A."/>
        </authorList>
    </citation>
    <scope>NUCLEOTIDE SEQUENCE [MRNA]</scope>
</reference>
<evidence type="ECO:0000250" key="1"/>
<evidence type="ECO:0000250" key="2">
    <source>
        <dbReference type="UniProtKB" id="O15344"/>
    </source>
</evidence>
<evidence type="ECO:0000255" key="3"/>
<evidence type="ECO:0000255" key="4">
    <source>
        <dbReference type="PROSITE-ProRule" id="PRU00024"/>
    </source>
</evidence>
<evidence type="ECO:0000255" key="5">
    <source>
        <dbReference type="PROSITE-ProRule" id="PRU00175"/>
    </source>
</evidence>
<evidence type="ECO:0000255" key="6">
    <source>
        <dbReference type="PROSITE-ProRule" id="PRU00316"/>
    </source>
</evidence>
<evidence type="ECO:0000255" key="7">
    <source>
        <dbReference type="PROSITE-ProRule" id="PRU00548"/>
    </source>
</evidence>
<evidence type="ECO:0000255" key="8">
    <source>
        <dbReference type="PROSITE-ProRule" id="PRU00586"/>
    </source>
</evidence>
<evidence type="ECO:0000256" key="9">
    <source>
        <dbReference type="SAM" id="MobiDB-lite"/>
    </source>
</evidence>
<evidence type="ECO:0000305" key="10"/>